<proteinExistence type="inferred from homology"/>
<accession>A1UR06</accession>
<name>HTPX_BARBK</name>
<sequence length="343" mass="37303">MNIMRTTMLLAFMTALFMGVGYLVGGGSGMVVALFIAGGLNFFSYWNSDKIVLRMYGAREVDEHSSPVYYRIVTKLAQRASLPQPKVYIINNAQPNAFATGRDPQNAAVAASTGLLKQLSAEEISGVMAHELAHIEHRDTLTMTLTATIAGAISMLGNFALLMGMGRQRNSSGNSQGAGMLGTVIALFVAPFAAMLVQMAISRTREYAADRRGAEICGNPLWLASALSKISGGGQTFYNEEAEHNPATAHMFIVNPLRGEGADSLFSTHPATENRIAALHKQAEKMAKEGNKGTKFAVENGLYRKHGNLEDEDLNPEAQNGFTHNQKKKTVRRGKDRPTWLRH</sequence>
<protein>
    <recommendedName>
        <fullName evidence="1">Protease HtpX homolog</fullName>
        <ecNumber evidence="1">3.4.24.-</ecNumber>
    </recommendedName>
</protein>
<feature type="chain" id="PRO_1000020847" description="Protease HtpX homolog">
    <location>
        <begin position="1"/>
        <end position="343"/>
    </location>
</feature>
<feature type="transmembrane region" description="Helical" evidence="1">
    <location>
        <begin position="7"/>
        <end position="24"/>
    </location>
</feature>
<feature type="transmembrane region" description="Helical" evidence="1">
    <location>
        <begin position="29"/>
        <end position="46"/>
    </location>
</feature>
<feature type="transmembrane region" description="Helical" evidence="1">
    <location>
        <begin position="145"/>
        <end position="165"/>
    </location>
</feature>
<feature type="transmembrane region" description="Helical" evidence="1">
    <location>
        <begin position="177"/>
        <end position="197"/>
    </location>
</feature>
<feature type="region of interest" description="Disordered" evidence="2">
    <location>
        <begin position="308"/>
        <end position="343"/>
    </location>
</feature>
<feature type="compositionally biased region" description="Basic residues" evidence="2">
    <location>
        <begin position="325"/>
        <end position="335"/>
    </location>
</feature>
<feature type="active site" evidence="1">
    <location>
        <position position="131"/>
    </location>
</feature>
<feature type="binding site" evidence="1">
    <location>
        <position position="130"/>
    </location>
    <ligand>
        <name>Zn(2+)</name>
        <dbReference type="ChEBI" id="CHEBI:29105"/>
        <note>catalytic</note>
    </ligand>
</feature>
<feature type="binding site" evidence="1">
    <location>
        <position position="134"/>
    </location>
    <ligand>
        <name>Zn(2+)</name>
        <dbReference type="ChEBI" id="CHEBI:29105"/>
        <note>catalytic</note>
    </ligand>
</feature>
<feature type="binding site" evidence="1">
    <location>
        <position position="206"/>
    </location>
    <ligand>
        <name>Zn(2+)</name>
        <dbReference type="ChEBI" id="CHEBI:29105"/>
        <note>catalytic</note>
    </ligand>
</feature>
<evidence type="ECO:0000255" key="1">
    <source>
        <dbReference type="HAMAP-Rule" id="MF_00188"/>
    </source>
</evidence>
<evidence type="ECO:0000256" key="2">
    <source>
        <dbReference type="SAM" id="MobiDB-lite"/>
    </source>
</evidence>
<dbReference type="EC" id="3.4.24.-" evidence="1"/>
<dbReference type="EMBL" id="CP000524">
    <property type="protein sequence ID" value="ABM44460.1"/>
    <property type="molecule type" value="Genomic_DNA"/>
</dbReference>
<dbReference type="RefSeq" id="WP_011807246.1">
    <property type="nucleotide sequence ID" value="NC_008783.1"/>
</dbReference>
<dbReference type="STRING" id="360095.BARBAKC583_0071"/>
<dbReference type="GeneID" id="4684473"/>
<dbReference type="KEGG" id="bbk:BARBAKC583_0071"/>
<dbReference type="PATRIC" id="fig|360095.6.peg.71"/>
<dbReference type="eggNOG" id="COG0501">
    <property type="taxonomic scope" value="Bacteria"/>
</dbReference>
<dbReference type="HOGENOM" id="CLU_042266_3_0_5"/>
<dbReference type="OrthoDB" id="15218at2"/>
<dbReference type="Proteomes" id="UP000000643">
    <property type="component" value="Chromosome"/>
</dbReference>
<dbReference type="GO" id="GO:0005886">
    <property type="term" value="C:plasma membrane"/>
    <property type="evidence" value="ECO:0007669"/>
    <property type="project" value="UniProtKB-SubCell"/>
</dbReference>
<dbReference type="GO" id="GO:0004222">
    <property type="term" value="F:metalloendopeptidase activity"/>
    <property type="evidence" value="ECO:0007669"/>
    <property type="project" value="UniProtKB-UniRule"/>
</dbReference>
<dbReference type="GO" id="GO:0008270">
    <property type="term" value="F:zinc ion binding"/>
    <property type="evidence" value="ECO:0007669"/>
    <property type="project" value="UniProtKB-UniRule"/>
</dbReference>
<dbReference type="GO" id="GO:0006508">
    <property type="term" value="P:proteolysis"/>
    <property type="evidence" value="ECO:0007669"/>
    <property type="project" value="UniProtKB-KW"/>
</dbReference>
<dbReference type="CDD" id="cd07336">
    <property type="entry name" value="M48B_HtpX_like"/>
    <property type="match status" value="1"/>
</dbReference>
<dbReference type="Gene3D" id="3.30.2010.10">
    <property type="entry name" value="Metalloproteases ('zincins'), catalytic domain"/>
    <property type="match status" value="1"/>
</dbReference>
<dbReference type="HAMAP" id="MF_00188">
    <property type="entry name" value="Pept_M48_protease_HtpX"/>
    <property type="match status" value="1"/>
</dbReference>
<dbReference type="InterPro" id="IPR050083">
    <property type="entry name" value="HtpX_protease"/>
</dbReference>
<dbReference type="InterPro" id="IPR022919">
    <property type="entry name" value="Pept_M48_protease_HtpX"/>
</dbReference>
<dbReference type="InterPro" id="IPR001915">
    <property type="entry name" value="Peptidase_M48"/>
</dbReference>
<dbReference type="NCBIfam" id="NF002363">
    <property type="entry name" value="PRK01345.1"/>
    <property type="match status" value="1"/>
</dbReference>
<dbReference type="NCBIfam" id="NF002826">
    <property type="entry name" value="PRK03001.1"/>
    <property type="match status" value="1"/>
</dbReference>
<dbReference type="PANTHER" id="PTHR43221">
    <property type="entry name" value="PROTEASE HTPX"/>
    <property type="match status" value="1"/>
</dbReference>
<dbReference type="PANTHER" id="PTHR43221:SF1">
    <property type="entry name" value="PROTEASE HTPX"/>
    <property type="match status" value="1"/>
</dbReference>
<dbReference type="Pfam" id="PF01435">
    <property type="entry name" value="Peptidase_M48"/>
    <property type="match status" value="1"/>
</dbReference>
<keyword id="KW-0997">Cell inner membrane</keyword>
<keyword id="KW-1003">Cell membrane</keyword>
<keyword id="KW-0378">Hydrolase</keyword>
<keyword id="KW-0472">Membrane</keyword>
<keyword id="KW-0479">Metal-binding</keyword>
<keyword id="KW-0482">Metalloprotease</keyword>
<keyword id="KW-0645">Protease</keyword>
<keyword id="KW-0812">Transmembrane</keyword>
<keyword id="KW-1133">Transmembrane helix</keyword>
<keyword id="KW-0862">Zinc</keyword>
<reference key="1">
    <citation type="submission" date="2006-12" db="EMBL/GenBank/DDBJ databases">
        <authorList>
            <person name="Hendrix L."/>
            <person name="Mohamoud Y."/>
            <person name="Radune D."/>
            <person name="Shvartsbeyn A."/>
            <person name="Daugherty S."/>
            <person name="Dodson R."/>
            <person name="Durkin A.S."/>
            <person name="Harkins D."/>
            <person name="Huot H."/>
            <person name="Kothari S.P."/>
            <person name="Madupu R."/>
            <person name="Li J."/>
            <person name="Nelson W.C."/>
            <person name="Shrivastava S."/>
            <person name="Giglio M.G."/>
            <person name="Haft D."/>
            <person name="Selengut J."/>
            <person name="Fraser-Ligget C."/>
            <person name="Seshadri R."/>
        </authorList>
    </citation>
    <scope>NUCLEOTIDE SEQUENCE [LARGE SCALE GENOMIC DNA]</scope>
    <source>
        <strain>ATCC 35685 / KC583 / Herrer 020/F12,63</strain>
    </source>
</reference>
<comment type="cofactor">
    <cofactor evidence="1">
        <name>Zn(2+)</name>
        <dbReference type="ChEBI" id="CHEBI:29105"/>
    </cofactor>
    <text evidence="1">Binds 1 zinc ion per subunit.</text>
</comment>
<comment type="subcellular location">
    <subcellularLocation>
        <location evidence="1">Cell inner membrane</location>
        <topology evidence="1">Multi-pass membrane protein</topology>
    </subcellularLocation>
</comment>
<comment type="similarity">
    <text evidence="1">Belongs to the peptidase M48B family.</text>
</comment>
<organism>
    <name type="scientific">Bartonella bacilliformis (strain ATCC 35685 / KC583 / Herrer 020/F12,63)</name>
    <dbReference type="NCBI Taxonomy" id="360095"/>
    <lineage>
        <taxon>Bacteria</taxon>
        <taxon>Pseudomonadati</taxon>
        <taxon>Pseudomonadota</taxon>
        <taxon>Alphaproteobacteria</taxon>
        <taxon>Hyphomicrobiales</taxon>
        <taxon>Bartonellaceae</taxon>
        <taxon>Bartonella</taxon>
    </lineage>
</organism>
<gene>
    <name evidence="1" type="primary">htpX</name>
    <name type="ordered locus">BARBAKC583_0071</name>
</gene>